<protein>
    <recommendedName>
        <fullName>Transmembrane protein 11, mitochondrial</fullName>
    </recommendedName>
</protein>
<evidence type="ECO:0000250" key="1"/>
<evidence type="ECO:0000255" key="2"/>
<evidence type="ECO:0000305" key="3"/>
<comment type="function">
    <text evidence="1">Plays a role in mitochondrial morphogenesis.</text>
</comment>
<comment type="subcellular location">
    <subcellularLocation>
        <location evidence="1">Mitochondrion inner membrane</location>
        <topology evidence="1">Multi-pass membrane protein</topology>
    </subcellularLocation>
</comment>
<comment type="similarity">
    <text evidence="3">Belongs to the TMEM11 family.</text>
</comment>
<proteinExistence type="evidence at transcript level"/>
<feature type="chain" id="PRO_0000360423" description="Transmembrane protein 11, mitochondrial">
    <location>
        <begin position="1"/>
        <end position="187"/>
    </location>
</feature>
<feature type="transmembrane region" description="Helical" evidence="2">
    <location>
        <begin position="80"/>
        <end position="96"/>
    </location>
</feature>
<feature type="transmembrane region" description="Helical" evidence="2">
    <location>
        <begin position="103"/>
        <end position="119"/>
    </location>
</feature>
<feature type="sequence conflict" description="In Ref. 1; AAH92726." evidence="3" ref="1">
    <original>I</original>
    <variation>T</variation>
    <location>
        <position position="62"/>
    </location>
</feature>
<dbReference type="EMBL" id="BC092726">
    <property type="protein sequence ID" value="AAH92726.1"/>
    <property type="molecule type" value="mRNA"/>
</dbReference>
<dbReference type="EMBL" id="BC067587">
    <property type="protein sequence ID" value="AAH67587.1"/>
    <property type="molecule type" value="mRNA"/>
</dbReference>
<dbReference type="RefSeq" id="NP_001017400.1">
    <property type="nucleotide sequence ID" value="NM_001017400.1"/>
</dbReference>
<dbReference type="FunCoup" id="Q6NWH5">
    <property type="interactions" value="2062"/>
</dbReference>
<dbReference type="STRING" id="7955.ENSDARP00000095170"/>
<dbReference type="PaxDb" id="7955-ENSDARP00000095170"/>
<dbReference type="Ensembl" id="ENSDART00000104397">
    <property type="protein sequence ID" value="ENSDARP00000095170"/>
    <property type="gene ID" value="ENSDARG00000070866"/>
</dbReference>
<dbReference type="GeneID" id="407695"/>
<dbReference type="KEGG" id="dre:407695"/>
<dbReference type="AGR" id="ZFIN:ZDB-GENE-050417-37"/>
<dbReference type="CTD" id="8834"/>
<dbReference type="ZFIN" id="ZDB-GENE-050417-37">
    <property type="gene designation" value="tmem11"/>
</dbReference>
<dbReference type="eggNOG" id="ENOG502QUAI">
    <property type="taxonomic scope" value="Eukaryota"/>
</dbReference>
<dbReference type="InParanoid" id="Q6NWH5"/>
<dbReference type="OMA" id="IGNCLHK"/>
<dbReference type="OrthoDB" id="9970856at2759"/>
<dbReference type="PhylomeDB" id="Q6NWH5"/>
<dbReference type="TreeFam" id="TF324685"/>
<dbReference type="PRO" id="PR:Q6NWH5"/>
<dbReference type="Proteomes" id="UP000000437">
    <property type="component" value="Chromosome 3"/>
</dbReference>
<dbReference type="Bgee" id="ENSDARG00000070866">
    <property type="expression patterns" value="Expressed in muscle tissue and 28 other cell types or tissues"/>
</dbReference>
<dbReference type="ExpressionAtlas" id="Q6NWH5">
    <property type="expression patterns" value="baseline"/>
</dbReference>
<dbReference type="GO" id="GO:0005743">
    <property type="term" value="C:mitochondrial inner membrane"/>
    <property type="evidence" value="ECO:0000250"/>
    <property type="project" value="UniProtKB"/>
</dbReference>
<dbReference type="GO" id="GO:0005741">
    <property type="term" value="C:mitochondrial outer membrane"/>
    <property type="evidence" value="ECO:0000314"/>
    <property type="project" value="ZFIN"/>
</dbReference>
<dbReference type="GO" id="GO:0007007">
    <property type="term" value="P:inner mitochondrial membrane organization"/>
    <property type="evidence" value="ECO:0000318"/>
    <property type="project" value="GO_Central"/>
</dbReference>
<dbReference type="GO" id="GO:0007005">
    <property type="term" value="P:mitochondrion organization"/>
    <property type="evidence" value="ECO:0000250"/>
    <property type="project" value="UniProtKB"/>
</dbReference>
<dbReference type="InterPro" id="IPR026120">
    <property type="entry name" value="TMEM11"/>
</dbReference>
<dbReference type="PANTHER" id="PTHR15099">
    <property type="entry name" value="PROTEIN PM1"/>
    <property type="match status" value="1"/>
</dbReference>
<dbReference type="PANTHER" id="PTHR15099:SF2">
    <property type="entry name" value="TRANSMEMBRANE PROTEIN 11, MITOCHONDRIAL"/>
    <property type="match status" value="1"/>
</dbReference>
<dbReference type="Pfam" id="PF14972">
    <property type="entry name" value="Mito_morph_reg"/>
    <property type="match status" value="1"/>
</dbReference>
<sequence>MASLGRRRGVPVNRERGVMAATECYIVHEIYNGENAQEQFEYELEQALEAQYRYIVIEPTRIGDETARWVAVGNCLHKTAVLAGAACLLTPLALPVEYSRYVALPAGALSLACATLYGISWQFDPCCKYQVEYDSQKLSRLPLHTLTSSTPVVLVRRDDVHRKRLHNTIALAALAYCAKKIYELYAV</sequence>
<name>TMM11_DANRE</name>
<organism>
    <name type="scientific">Danio rerio</name>
    <name type="common">Zebrafish</name>
    <name type="synonym">Brachydanio rerio</name>
    <dbReference type="NCBI Taxonomy" id="7955"/>
    <lineage>
        <taxon>Eukaryota</taxon>
        <taxon>Metazoa</taxon>
        <taxon>Chordata</taxon>
        <taxon>Craniata</taxon>
        <taxon>Vertebrata</taxon>
        <taxon>Euteleostomi</taxon>
        <taxon>Actinopterygii</taxon>
        <taxon>Neopterygii</taxon>
        <taxon>Teleostei</taxon>
        <taxon>Ostariophysi</taxon>
        <taxon>Cypriniformes</taxon>
        <taxon>Danionidae</taxon>
        <taxon>Danioninae</taxon>
        <taxon>Danio</taxon>
    </lineage>
</organism>
<reference key="1">
    <citation type="submission" date="2005-04" db="EMBL/GenBank/DDBJ databases">
        <authorList>
            <consortium name="NIH - Zebrafish Gene Collection (ZGC) project"/>
        </authorList>
    </citation>
    <scope>NUCLEOTIDE SEQUENCE [LARGE SCALE MRNA]</scope>
    <source>
        <tissue>Embryo</tissue>
    </source>
</reference>
<keyword id="KW-0472">Membrane</keyword>
<keyword id="KW-0496">Mitochondrion</keyword>
<keyword id="KW-0999">Mitochondrion inner membrane</keyword>
<keyword id="KW-1185">Reference proteome</keyword>
<keyword id="KW-0812">Transmembrane</keyword>
<keyword id="KW-1133">Transmembrane helix</keyword>
<accession>Q6NWH5</accession>
<accession>Q561Y8</accession>
<gene>
    <name type="primary">tmem11</name>
    <name type="ORF">zgc:110086</name>
</gene>